<evidence type="ECO:0000255" key="1">
    <source>
        <dbReference type="HAMAP-Rule" id="MF_00193"/>
    </source>
</evidence>
<protein>
    <recommendedName>
        <fullName evidence="1">NH(3)-dependent NAD(+) synthetase</fullName>
        <ecNumber evidence="1">6.3.1.5</ecNumber>
    </recommendedName>
</protein>
<organism>
    <name type="scientific">Escherichia coli O157:H7 (strain EC4115 / EHEC)</name>
    <dbReference type="NCBI Taxonomy" id="444450"/>
    <lineage>
        <taxon>Bacteria</taxon>
        <taxon>Pseudomonadati</taxon>
        <taxon>Pseudomonadota</taxon>
        <taxon>Gammaproteobacteria</taxon>
        <taxon>Enterobacterales</taxon>
        <taxon>Enterobacteriaceae</taxon>
        <taxon>Escherichia</taxon>
    </lineage>
</organism>
<reference key="1">
    <citation type="journal article" date="2011" name="Proc. Natl. Acad. Sci. U.S.A.">
        <title>Genomic anatomy of Escherichia coli O157:H7 outbreaks.</title>
        <authorList>
            <person name="Eppinger M."/>
            <person name="Mammel M.K."/>
            <person name="Leclerc J.E."/>
            <person name="Ravel J."/>
            <person name="Cebula T.A."/>
        </authorList>
    </citation>
    <scope>NUCLEOTIDE SEQUENCE [LARGE SCALE GENOMIC DNA]</scope>
    <source>
        <strain>EC4115 / EHEC</strain>
    </source>
</reference>
<comment type="function">
    <text evidence="1">Catalyzes the ATP-dependent amidation of deamido-NAD to form NAD. Uses ammonia as a nitrogen source.</text>
</comment>
<comment type="catalytic activity">
    <reaction evidence="1">
        <text>deamido-NAD(+) + NH4(+) + ATP = AMP + diphosphate + NAD(+) + H(+)</text>
        <dbReference type="Rhea" id="RHEA:21188"/>
        <dbReference type="ChEBI" id="CHEBI:15378"/>
        <dbReference type="ChEBI" id="CHEBI:28938"/>
        <dbReference type="ChEBI" id="CHEBI:30616"/>
        <dbReference type="ChEBI" id="CHEBI:33019"/>
        <dbReference type="ChEBI" id="CHEBI:57540"/>
        <dbReference type="ChEBI" id="CHEBI:58437"/>
        <dbReference type="ChEBI" id="CHEBI:456215"/>
        <dbReference type="EC" id="6.3.1.5"/>
    </reaction>
</comment>
<comment type="pathway">
    <text evidence="1">Cofactor biosynthesis; NAD(+) biosynthesis; NAD(+) from deamido-NAD(+) (ammonia route): step 1/1.</text>
</comment>
<comment type="subunit">
    <text evidence="1">Homodimer.</text>
</comment>
<comment type="similarity">
    <text evidence="1">Belongs to the NAD synthetase family.</text>
</comment>
<proteinExistence type="inferred from homology"/>
<sequence>MTLQQQIIKALGAKPQINAEEEIRRSVDFLKSYLQTYPFIKSLVLGISGGQDSTLAGKLCQMAINELRQETGNESLQFIAVRLPYGVQADEQDCQDAIAFIQPDRVLTVNIKGAVLASEQALREACIELSDFVRGNEKARERMKAQYSIAGMTSGVVVGTDHAAEAITGFFTKYGDGGTDINPLYRLNKRQGKQLLAALGCPEHLYKKAPTADLEDDRPSLPDEVALGVTYDNIDDYLEGKNVPQQVARTIENWYLKTEHKRRPPITVFDDFWKK</sequence>
<accession>B5YQ27</accession>
<gene>
    <name evidence="1" type="primary">nadE</name>
    <name type="ordered locus">ECH74115_2458</name>
</gene>
<dbReference type="EC" id="6.3.1.5" evidence="1"/>
<dbReference type="EMBL" id="CP001164">
    <property type="protein sequence ID" value="ACI35577.1"/>
    <property type="molecule type" value="Genomic_DNA"/>
</dbReference>
<dbReference type="RefSeq" id="WP_000175032.1">
    <property type="nucleotide sequence ID" value="NC_011353.1"/>
</dbReference>
<dbReference type="SMR" id="B5YQ27"/>
<dbReference type="KEGG" id="ecf:ECH74115_2458"/>
<dbReference type="HOGENOM" id="CLU_059327_3_0_6"/>
<dbReference type="UniPathway" id="UPA00253">
    <property type="reaction ID" value="UER00333"/>
</dbReference>
<dbReference type="GO" id="GO:0005737">
    <property type="term" value="C:cytoplasm"/>
    <property type="evidence" value="ECO:0007669"/>
    <property type="project" value="InterPro"/>
</dbReference>
<dbReference type="GO" id="GO:0005524">
    <property type="term" value="F:ATP binding"/>
    <property type="evidence" value="ECO:0007669"/>
    <property type="project" value="UniProtKB-UniRule"/>
</dbReference>
<dbReference type="GO" id="GO:0004359">
    <property type="term" value="F:glutaminase activity"/>
    <property type="evidence" value="ECO:0007669"/>
    <property type="project" value="InterPro"/>
</dbReference>
<dbReference type="GO" id="GO:0046872">
    <property type="term" value="F:metal ion binding"/>
    <property type="evidence" value="ECO:0007669"/>
    <property type="project" value="UniProtKB-KW"/>
</dbReference>
<dbReference type="GO" id="GO:0003952">
    <property type="term" value="F:NAD+ synthase (glutamine-hydrolyzing) activity"/>
    <property type="evidence" value="ECO:0007669"/>
    <property type="project" value="InterPro"/>
</dbReference>
<dbReference type="GO" id="GO:0008795">
    <property type="term" value="F:NAD+ synthase activity"/>
    <property type="evidence" value="ECO:0007669"/>
    <property type="project" value="UniProtKB-UniRule"/>
</dbReference>
<dbReference type="GO" id="GO:0009435">
    <property type="term" value="P:NAD biosynthetic process"/>
    <property type="evidence" value="ECO:0007669"/>
    <property type="project" value="UniProtKB-UniRule"/>
</dbReference>
<dbReference type="CDD" id="cd00553">
    <property type="entry name" value="NAD_synthase"/>
    <property type="match status" value="1"/>
</dbReference>
<dbReference type="FunFam" id="3.40.50.620:FF:000015">
    <property type="entry name" value="NH(3)-dependent NAD(+) synthetase"/>
    <property type="match status" value="1"/>
</dbReference>
<dbReference type="Gene3D" id="3.40.50.620">
    <property type="entry name" value="HUPs"/>
    <property type="match status" value="1"/>
</dbReference>
<dbReference type="HAMAP" id="MF_00193">
    <property type="entry name" value="NadE_ammonia_dep"/>
    <property type="match status" value="1"/>
</dbReference>
<dbReference type="InterPro" id="IPR022310">
    <property type="entry name" value="NAD/GMP_synthase"/>
</dbReference>
<dbReference type="InterPro" id="IPR003694">
    <property type="entry name" value="NAD_synthase"/>
</dbReference>
<dbReference type="InterPro" id="IPR022926">
    <property type="entry name" value="NH(3)-dep_NAD(+)_synth"/>
</dbReference>
<dbReference type="InterPro" id="IPR014729">
    <property type="entry name" value="Rossmann-like_a/b/a_fold"/>
</dbReference>
<dbReference type="NCBIfam" id="TIGR00552">
    <property type="entry name" value="nadE"/>
    <property type="match status" value="1"/>
</dbReference>
<dbReference type="NCBIfam" id="NF001979">
    <property type="entry name" value="PRK00768.1"/>
    <property type="match status" value="1"/>
</dbReference>
<dbReference type="PANTHER" id="PTHR23090">
    <property type="entry name" value="NH 3 /GLUTAMINE-DEPENDENT NAD + SYNTHETASE"/>
    <property type="match status" value="1"/>
</dbReference>
<dbReference type="PANTHER" id="PTHR23090:SF7">
    <property type="entry name" value="NH(3)-DEPENDENT NAD(+) SYNTHETASE"/>
    <property type="match status" value="1"/>
</dbReference>
<dbReference type="Pfam" id="PF02540">
    <property type="entry name" value="NAD_synthase"/>
    <property type="match status" value="1"/>
</dbReference>
<dbReference type="SUPFAM" id="SSF52402">
    <property type="entry name" value="Adenine nucleotide alpha hydrolases-like"/>
    <property type="match status" value="1"/>
</dbReference>
<keyword id="KW-0067">ATP-binding</keyword>
<keyword id="KW-0436">Ligase</keyword>
<keyword id="KW-0460">Magnesium</keyword>
<keyword id="KW-0479">Metal-binding</keyword>
<keyword id="KW-0520">NAD</keyword>
<keyword id="KW-0547">Nucleotide-binding</keyword>
<name>NADE_ECO5E</name>
<feature type="chain" id="PRO_1000099018" description="NH(3)-dependent NAD(+) synthetase">
    <location>
        <begin position="1"/>
        <end position="275"/>
    </location>
</feature>
<feature type="binding site" evidence="1">
    <location>
        <begin position="46"/>
        <end position="53"/>
    </location>
    <ligand>
        <name>ATP</name>
        <dbReference type="ChEBI" id="CHEBI:30616"/>
    </ligand>
</feature>
<feature type="binding site" evidence="1">
    <location>
        <position position="52"/>
    </location>
    <ligand>
        <name>Mg(2+)</name>
        <dbReference type="ChEBI" id="CHEBI:18420"/>
    </ligand>
</feature>
<feature type="binding site" evidence="1">
    <location>
        <position position="140"/>
    </location>
    <ligand>
        <name>deamido-NAD(+)</name>
        <dbReference type="ChEBI" id="CHEBI:58437"/>
    </ligand>
</feature>
<feature type="binding site" evidence="1">
    <location>
        <position position="160"/>
    </location>
    <ligand>
        <name>ATP</name>
        <dbReference type="ChEBI" id="CHEBI:30616"/>
    </ligand>
</feature>
<feature type="binding site" evidence="1">
    <location>
        <position position="165"/>
    </location>
    <ligand>
        <name>Mg(2+)</name>
        <dbReference type="ChEBI" id="CHEBI:18420"/>
    </ligand>
</feature>
<feature type="binding site" evidence="1">
    <location>
        <position position="173"/>
    </location>
    <ligand>
        <name>deamido-NAD(+)</name>
        <dbReference type="ChEBI" id="CHEBI:58437"/>
    </ligand>
</feature>
<feature type="binding site" evidence="1">
    <location>
        <position position="180"/>
    </location>
    <ligand>
        <name>deamido-NAD(+)</name>
        <dbReference type="ChEBI" id="CHEBI:58437"/>
    </ligand>
</feature>
<feature type="binding site" evidence="1">
    <location>
        <position position="189"/>
    </location>
    <ligand>
        <name>ATP</name>
        <dbReference type="ChEBI" id="CHEBI:30616"/>
    </ligand>
</feature>
<feature type="binding site" evidence="1">
    <location>
        <position position="211"/>
    </location>
    <ligand>
        <name>ATP</name>
        <dbReference type="ChEBI" id="CHEBI:30616"/>
    </ligand>
</feature>
<feature type="binding site" evidence="1">
    <location>
        <begin position="260"/>
        <end position="261"/>
    </location>
    <ligand>
        <name>deamido-NAD(+)</name>
        <dbReference type="ChEBI" id="CHEBI:58437"/>
    </ligand>
</feature>